<feature type="chain" id="PRO_0000122026" description="Serine--tRNA ligase">
    <location>
        <begin position="1"/>
        <end position="436"/>
    </location>
</feature>
<feature type="binding site" evidence="1">
    <location>
        <begin position="239"/>
        <end position="241"/>
    </location>
    <ligand>
        <name>L-serine</name>
        <dbReference type="ChEBI" id="CHEBI:33384"/>
    </ligand>
</feature>
<feature type="binding site" evidence="1">
    <location>
        <begin position="270"/>
        <end position="272"/>
    </location>
    <ligand>
        <name>ATP</name>
        <dbReference type="ChEBI" id="CHEBI:30616"/>
    </ligand>
</feature>
<feature type="binding site" evidence="1">
    <location>
        <position position="293"/>
    </location>
    <ligand>
        <name>L-serine</name>
        <dbReference type="ChEBI" id="CHEBI:33384"/>
    </ligand>
</feature>
<feature type="binding site" evidence="1">
    <location>
        <begin position="357"/>
        <end position="360"/>
    </location>
    <ligand>
        <name>ATP</name>
        <dbReference type="ChEBI" id="CHEBI:30616"/>
    </ligand>
</feature>
<feature type="binding site" evidence="1">
    <location>
        <position position="393"/>
    </location>
    <ligand>
        <name>L-serine</name>
        <dbReference type="ChEBI" id="CHEBI:33384"/>
    </ligand>
</feature>
<name>SYS_BLOFL</name>
<accession>Q7VR39</accession>
<reference key="1">
    <citation type="journal article" date="2003" name="Proc. Natl. Acad. Sci. U.S.A.">
        <title>The genome sequence of Blochmannia floridanus: comparative analysis of reduced genomes.</title>
        <authorList>
            <person name="Gil R."/>
            <person name="Silva F.J."/>
            <person name="Zientz E."/>
            <person name="Delmotte F."/>
            <person name="Gonzalez-Candelas F."/>
            <person name="Latorre A."/>
            <person name="Rausell C."/>
            <person name="Kamerbeek J."/>
            <person name="Gadau J."/>
            <person name="Hoelldobler B."/>
            <person name="van Ham R.C.H.J."/>
            <person name="Gross R."/>
            <person name="Moya A."/>
        </authorList>
    </citation>
    <scope>NUCLEOTIDE SEQUENCE [LARGE SCALE GENOMIC DNA]</scope>
</reference>
<evidence type="ECO:0000255" key="1">
    <source>
        <dbReference type="HAMAP-Rule" id="MF_00176"/>
    </source>
</evidence>
<keyword id="KW-0030">Aminoacyl-tRNA synthetase</keyword>
<keyword id="KW-0067">ATP-binding</keyword>
<keyword id="KW-0963">Cytoplasm</keyword>
<keyword id="KW-0436">Ligase</keyword>
<keyword id="KW-0547">Nucleotide-binding</keyword>
<keyword id="KW-0648">Protein biosynthesis</keyword>
<keyword id="KW-1185">Reference proteome</keyword>
<sequence length="436" mass="50283">MLDTNLLFNHFEWVAKKLARKNFVLNFDELNQYNDLRKILQKKIEKLQIDRKNLSKTIILAKSQQINLQSLQKQARLLNQKLILIKSEIRTLKSKIKQYQLSIPNIPDDEIPNGFKDQDNIEIMRWGKVHKYDFKLLDHITLGKLIGGIDLSSASKITGTRFIILKGEIAYLHRALSQFMIDIHIQNHGYIEYYLPYLINVESLYGSGQLPKFYDDLFHTQSVVSVNSSKCSTYTLIPTAEVPLVNIMRSVTVHKNELPIKMVAHTPCFRLEAGTYGYRAHGLIRTHQFDKVELVQVVHPDQSVQALEEITNHAEKILQLLELPYRKMLLCAGNISFTSCKTYDLEVWLPARNEYCEISSCSNIRDFQSRRINARFKDGINKRSKLLHTLNASGVAVGRALVAILENYQLENGCIKIPEVLSPYMNGMTHIHYQNK</sequence>
<comment type="function">
    <text evidence="1">Catalyzes the attachment of serine to tRNA(Ser). Is also able to aminoacylate tRNA(Sec) with serine, to form the misacylated tRNA L-seryl-tRNA(Sec), which will be further converted into selenocysteinyl-tRNA(Sec).</text>
</comment>
<comment type="catalytic activity">
    <reaction evidence="1">
        <text>tRNA(Ser) + L-serine + ATP = L-seryl-tRNA(Ser) + AMP + diphosphate + H(+)</text>
        <dbReference type="Rhea" id="RHEA:12292"/>
        <dbReference type="Rhea" id="RHEA-COMP:9669"/>
        <dbReference type="Rhea" id="RHEA-COMP:9703"/>
        <dbReference type="ChEBI" id="CHEBI:15378"/>
        <dbReference type="ChEBI" id="CHEBI:30616"/>
        <dbReference type="ChEBI" id="CHEBI:33019"/>
        <dbReference type="ChEBI" id="CHEBI:33384"/>
        <dbReference type="ChEBI" id="CHEBI:78442"/>
        <dbReference type="ChEBI" id="CHEBI:78533"/>
        <dbReference type="ChEBI" id="CHEBI:456215"/>
        <dbReference type="EC" id="6.1.1.11"/>
    </reaction>
</comment>
<comment type="catalytic activity">
    <reaction evidence="1">
        <text>tRNA(Sec) + L-serine + ATP = L-seryl-tRNA(Sec) + AMP + diphosphate + H(+)</text>
        <dbReference type="Rhea" id="RHEA:42580"/>
        <dbReference type="Rhea" id="RHEA-COMP:9742"/>
        <dbReference type="Rhea" id="RHEA-COMP:10128"/>
        <dbReference type="ChEBI" id="CHEBI:15378"/>
        <dbReference type="ChEBI" id="CHEBI:30616"/>
        <dbReference type="ChEBI" id="CHEBI:33019"/>
        <dbReference type="ChEBI" id="CHEBI:33384"/>
        <dbReference type="ChEBI" id="CHEBI:78442"/>
        <dbReference type="ChEBI" id="CHEBI:78533"/>
        <dbReference type="ChEBI" id="CHEBI:456215"/>
        <dbReference type="EC" id="6.1.1.11"/>
    </reaction>
</comment>
<comment type="pathway">
    <text evidence="1">Aminoacyl-tRNA biosynthesis; selenocysteinyl-tRNA(Sec) biosynthesis; L-seryl-tRNA(Sec) from L-serine and tRNA(Sec): step 1/1.</text>
</comment>
<comment type="subunit">
    <text evidence="1">Homodimer. The tRNA molecule binds across the dimer.</text>
</comment>
<comment type="subcellular location">
    <subcellularLocation>
        <location evidence="1">Cytoplasm</location>
    </subcellularLocation>
</comment>
<comment type="domain">
    <text evidence="1">Consists of two distinct domains, a catalytic core and a N-terminal extension that is involved in tRNA binding.</text>
</comment>
<comment type="similarity">
    <text evidence="1">Belongs to the class-II aminoacyl-tRNA synthetase family. Type-1 seryl-tRNA synthetase subfamily.</text>
</comment>
<organism>
    <name type="scientific">Blochmanniella floridana</name>
    <dbReference type="NCBI Taxonomy" id="203907"/>
    <lineage>
        <taxon>Bacteria</taxon>
        <taxon>Pseudomonadati</taxon>
        <taxon>Pseudomonadota</taxon>
        <taxon>Gammaproteobacteria</taxon>
        <taxon>Enterobacterales</taxon>
        <taxon>Enterobacteriaceae</taxon>
        <taxon>ant endosymbionts</taxon>
        <taxon>Candidatus Blochmanniella</taxon>
    </lineage>
</organism>
<proteinExistence type="inferred from homology"/>
<gene>
    <name evidence="1" type="primary">serS</name>
    <name type="ordered locus">Bfl384</name>
</gene>
<dbReference type="EC" id="6.1.1.11" evidence="1"/>
<dbReference type="EMBL" id="BX248583">
    <property type="protein sequence ID" value="CAD83450.1"/>
    <property type="molecule type" value="Genomic_DNA"/>
</dbReference>
<dbReference type="SMR" id="Q7VR39"/>
<dbReference type="STRING" id="203907.Bfl384"/>
<dbReference type="KEGG" id="bfl:Bfl384"/>
<dbReference type="eggNOG" id="COG0172">
    <property type="taxonomic scope" value="Bacteria"/>
</dbReference>
<dbReference type="HOGENOM" id="CLU_023797_1_1_6"/>
<dbReference type="OrthoDB" id="9804647at2"/>
<dbReference type="UniPathway" id="UPA00906">
    <property type="reaction ID" value="UER00895"/>
</dbReference>
<dbReference type="Proteomes" id="UP000002192">
    <property type="component" value="Chromosome"/>
</dbReference>
<dbReference type="GO" id="GO:0005737">
    <property type="term" value="C:cytoplasm"/>
    <property type="evidence" value="ECO:0007669"/>
    <property type="project" value="UniProtKB-SubCell"/>
</dbReference>
<dbReference type="GO" id="GO:0005524">
    <property type="term" value="F:ATP binding"/>
    <property type="evidence" value="ECO:0007669"/>
    <property type="project" value="UniProtKB-UniRule"/>
</dbReference>
<dbReference type="GO" id="GO:0004828">
    <property type="term" value="F:serine-tRNA ligase activity"/>
    <property type="evidence" value="ECO:0007669"/>
    <property type="project" value="UniProtKB-UniRule"/>
</dbReference>
<dbReference type="GO" id="GO:0016260">
    <property type="term" value="P:selenocysteine biosynthetic process"/>
    <property type="evidence" value="ECO:0007669"/>
    <property type="project" value="UniProtKB-UniRule"/>
</dbReference>
<dbReference type="GO" id="GO:0006434">
    <property type="term" value="P:seryl-tRNA aminoacylation"/>
    <property type="evidence" value="ECO:0007669"/>
    <property type="project" value="UniProtKB-UniRule"/>
</dbReference>
<dbReference type="CDD" id="cd00770">
    <property type="entry name" value="SerRS_core"/>
    <property type="match status" value="1"/>
</dbReference>
<dbReference type="Gene3D" id="3.30.930.10">
    <property type="entry name" value="Bira Bifunctional Protein, Domain 2"/>
    <property type="match status" value="1"/>
</dbReference>
<dbReference type="Gene3D" id="1.10.287.40">
    <property type="entry name" value="Serine-tRNA synthetase, tRNA binding domain"/>
    <property type="match status" value="1"/>
</dbReference>
<dbReference type="HAMAP" id="MF_00176">
    <property type="entry name" value="Ser_tRNA_synth_type1"/>
    <property type="match status" value="1"/>
</dbReference>
<dbReference type="InterPro" id="IPR002314">
    <property type="entry name" value="aa-tRNA-synt_IIb"/>
</dbReference>
<dbReference type="InterPro" id="IPR006195">
    <property type="entry name" value="aa-tRNA-synth_II"/>
</dbReference>
<dbReference type="InterPro" id="IPR045864">
    <property type="entry name" value="aa-tRNA-synth_II/BPL/LPL"/>
</dbReference>
<dbReference type="InterPro" id="IPR002317">
    <property type="entry name" value="Ser-tRNA-ligase_type_1"/>
</dbReference>
<dbReference type="InterPro" id="IPR015866">
    <property type="entry name" value="Ser-tRNA-synth_1_N"/>
</dbReference>
<dbReference type="InterPro" id="IPR042103">
    <property type="entry name" value="SerRS_1_N_sf"/>
</dbReference>
<dbReference type="InterPro" id="IPR033729">
    <property type="entry name" value="SerRS_core"/>
</dbReference>
<dbReference type="InterPro" id="IPR010978">
    <property type="entry name" value="tRNA-bd_arm"/>
</dbReference>
<dbReference type="NCBIfam" id="TIGR00414">
    <property type="entry name" value="serS"/>
    <property type="match status" value="1"/>
</dbReference>
<dbReference type="PANTHER" id="PTHR43697:SF1">
    <property type="entry name" value="SERINE--TRNA LIGASE"/>
    <property type="match status" value="1"/>
</dbReference>
<dbReference type="PANTHER" id="PTHR43697">
    <property type="entry name" value="SERYL-TRNA SYNTHETASE"/>
    <property type="match status" value="1"/>
</dbReference>
<dbReference type="Pfam" id="PF02403">
    <property type="entry name" value="Seryl_tRNA_N"/>
    <property type="match status" value="1"/>
</dbReference>
<dbReference type="Pfam" id="PF00587">
    <property type="entry name" value="tRNA-synt_2b"/>
    <property type="match status" value="1"/>
</dbReference>
<dbReference type="PIRSF" id="PIRSF001529">
    <property type="entry name" value="Ser-tRNA-synth_IIa"/>
    <property type="match status" value="1"/>
</dbReference>
<dbReference type="PRINTS" id="PR00981">
    <property type="entry name" value="TRNASYNTHSER"/>
</dbReference>
<dbReference type="SUPFAM" id="SSF55681">
    <property type="entry name" value="Class II aaRS and biotin synthetases"/>
    <property type="match status" value="1"/>
</dbReference>
<dbReference type="SUPFAM" id="SSF46589">
    <property type="entry name" value="tRNA-binding arm"/>
    <property type="match status" value="1"/>
</dbReference>
<dbReference type="PROSITE" id="PS50862">
    <property type="entry name" value="AA_TRNA_LIGASE_II"/>
    <property type="match status" value="1"/>
</dbReference>
<protein>
    <recommendedName>
        <fullName evidence="1">Serine--tRNA ligase</fullName>
        <ecNumber evidence="1">6.1.1.11</ecNumber>
    </recommendedName>
    <alternativeName>
        <fullName evidence="1">Seryl-tRNA synthetase</fullName>
        <shortName evidence="1">SerRS</shortName>
    </alternativeName>
    <alternativeName>
        <fullName evidence="1">Seryl-tRNA(Ser/Sec) synthetase</fullName>
    </alternativeName>
</protein>